<name>VKT2_PSERS</name>
<keyword id="KW-1015">Disulfide bond</keyword>
<keyword id="KW-0646">Protease inhibitor</keyword>
<keyword id="KW-0964">Secreted</keyword>
<keyword id="KW-0722">Serine protease inhibitor</keyword>
<keyword id="KW-0732">Signal</keyword>
<keyword id="KW-0800">Toxin</keyword>
<organism>
    <name type="scientific">Pseudechis rossignolii</name>
    <name type="common">Papuan pigmy mulga snake</name>
    <dbReference type="NCBI Taxonomy" id="1489342"/>
    <lineage>
        <taxon>Eukaryota</taxon>
        <taxon>Metazoa</taxon>
        <taxon>Chordata</taxon>
        <taxon>Craniata</taxon>
        <taxon>Vertebrata</taxon>
        <taxon>Euteleostomi</taxon>
        <taxon>Lepidosauria</taxon>
        <taxon>Squamata</taxon>
        <taxon>Bifurcata</taxon>
        <taxon>Unidentata</taxon>
        <taxon>Episquamata</taxon>
        <taxon>Toxicofera</taxon>
        <taxon>Serpentes</taxon>
        <taxon>Colubroidea</taxon>
        <taxon>Elapidae</taxon>
        <taxon>Hydrophiinae</taxon>
        <taxon>Pseudechis</taxon>
    </lineage>
</organism>
<evidence type="ECO:0000250" key="1"/>
<evidence type="ECO:0000255" key="2"/>
<evidence type="ECO:0000255" key="3">
    <source>
        <dbReference type="PROSITE-ProRule" id="PRU00031"/>
    </source>
</evidence>
<evidence type="ECO:0000269" key="4">
    <source>
    </source>
</evidence>
<evidence type="ECO:0000305" key="5"/>
<evidence type="ECO:0000305" key="6">
    <source>
    </source>
</evidence>
<accession>E7FL12</accession>
<proteinExistence type="evidence at transcript level"/>
<feature type="signal peptide" evidence="2">
    <location>
        <begin position="1"/>
        <end position="24"/>
    </location>
</feature>
<feature type="chain" id="PRO_0000429463" description="Kunitz serine protease inhibitor Pr-mulgin 2">
    <location>
        <begin position="25"/>
        <end position="83"/>
    </location>
</feature>
<feature type="domain" description="BPTI/Kunitz inhibitor" evidence="3">
    <location>
        <begin position="31"/>
        <end position="81"/>
    </location>
</feature>
<feature type="site" description="Reactive bond for trypsin" evidence="1">
    <location>
        <begin position="41"/>
        <end position="42"/>
    </location>
</feature>
<feature type="disulfide bond" evidence="3">
    <location>
        <begin position="31"/>
        <end position="81"/>
    </location>
</feature>
<feature type="disulfide bond" evidence="3">
    <location>
        <begin position="40"/>
        <end position="64"/>
    </location>
</feature>
<feature type="disulfide bond" evidence="3">
    <location>
        <begin position="56"/>
        <end position="77"/>
    </location>
</feature>
<protein>
    <recommendedName>
        <fullName>Kunitz serine protease inhibitor Pr-mulgin 2</fullName>
    </recommendedName>
</protein>
<sequence length="83" mass="9241">MSSGGLLLLLGLLTLWEGLTPVSSKDRPHFCHLPHDPGPCKGNFQAFYYHPVRRTCLEFIYGGCQGNPNNFKTIDECKRTCAA</sequence>
<dbReference type="EMBL" id="AB576155">
    <property type="protein sequence ID" value="BAJ76675.1"/>
    <property type="molecule type" value="mRNA"/>
</dbReference>
<dbReference type="SMR" id="E7FL12"/>
<dbReference type="MEROPS" id="I02.052"/>
<dbReference type="GO" id="GO:0005576">
    <property type="term" value="C:extracellular region"/>
    <property type="evidence" value="ECO:0007669"/>
    <property type="project" value="UniProtKB-SubCell"/>
</dbReference>
<dbReference type="GO" id="GO:0004867">
    <property type="term" value="F:serine-type endopeptidase inhibitor activity"/>
    <property type="evidence" value="ECO:0007669"/>
    <property type="project" value="UniProtKB-KW"/>
</dbReference>
<dbReference type="GO" id="GO:0090729">
    <property type="term" value="F:toxin activity"/>
    <property type="evidence" value="ECO:0007669"/>
    <property type="project" value="UniProtKB-KW"/>
</dbReference>
<dbReference type="CDD" id="cd22594">
    <property type="entry name" value="Kunitz_textilinin-like"/>
    <property type="match status" value="1"/>
</dbReference>
<dbReference type="FunFam" id="4.10.410.10:FF:000004">
    <property type="entry name" value="Tissue factor pathway inhibitor"/>
    <property type="match status" value="1"/>
</dbReference>
<dbReference type="Gene3D" id="4.10.410.10">
    <property type="entry name" value="Pancreatic trypsin inhibitor Kunitz domain"/>
    <property type="match status" value="1"/>
</dbReference>
<dbReference type="InterPro" id="IPR002223">
    <property type="entry name" value="Kunitz_BPTI"/>
</dbReference>
<dbReference type="InterPro" id="IPR036880">
    <property type="entry name" value="Kunitz_BPTI_sf"/>
</dbReference>
<dbReference type="InterPro" id="IPR020901">
    <property type="entry name" value="Prtase_inh_Kunz-CS"/>
</dbReference>
<dbReference type="InterPro" id="IPR050098">
    <property type="entry name" value="TFPI/VKTCI-like"/>
</dbReference>
<dbReference type="PANTHER" id="PTHR10083">
    <property type="entry name" value="KUNITZ-TYPE PROTEASE INHIBITOR-RELATED"/>
    <property type="match status" value="1"/>
</dbReference>
<dbReference type="Pfam" id="PF00014">
    <property type="entry name" value="Kunitz_BPTI"/>
    <property type="match status" value="1"/>
</dbReference>
<dbReference type="PRINTS" id="PR00759">
    <property type="entry name" value="BASICPTASE"/>
</dbReference>
<dbReference type="SMART" id="SM00131">
    <property type="entry name" value="KU"/>
    <property type="match status" value="1"/>
</dbReference>
<dbReference type="SUPFAM" id="SSF57362">
    <property type="entry name" value="BPTI-like"/>
    <property type="match status" value="1"/>
</dbReference>
<dbReference type="PROSITE" id="PS00280">
    <property type="entry name" value="BPTI_KUNITZ_1"/>
    <property type="match status" value="1"/>
</dbReference>
<dbReference type="PROSITE" id="PS50279">
    <property type="entry name" value="BPTI_KUNITZ_2"/>
    <property type="match status" value="1"/>
</dbReference>
<comment type="function">
    <text evidence="4">Serine protease inhibitor that acts against trypsin (EC(50)=10 nM, Ki=5nM), chymotrypsin (EC(50)=100 nM, Ki=40 nM), and plasmin (EC(50)=100 nM, Ki=40 nM).</text>
</comment>
<comment type="subcellular location">
    <subcellularLocation>
        <location evidence="1">Secreted</location>
    </subcellularLocation>
</comment>
<comment type="tissue specificity">
    <text>Expressed by the venom gland.</text>
</comment>
<comment type="miscellaneous">
    <text evidence="6">Negative results: does not inhibit serine proteases (elastase, kallikrein, and pepsin), cysteine protease (cathepsin G), and MMP (1, 3, 7, 8, 9, 10, 12, 13, and 14), as well as voltage-gated potassium channels (Shaker and rKv1.1/KCNA1).</text>
</comment>
<comment type="similarity">
    <text evidence="5">Belongs to the venom Kunitz-type family.</text>
</comment>
<reference key="1">
    <citation type="journal article" date="2012" name="Toxicon">
        <title>Functional characterization of Kunitz-type protease inhibitor Pr-mulgins identified from New Guinean Pseudechis australis.</title>
        <authorList>
            <person name="Inagaki H."/>
            <person name="Kimoto H."/>
            <person name="Yamauchi Y."/>
            <person name="Toriba M."/>
            <person name="Kubo T."/>
        </authorList>
    </citation>
    <scope>NUCLEOTIDE SEQUENCE [MRNA]</scope>
    <scope>FUNCTION</scope>
    <source>
        <tissue>Venom gland</tissue>
    </source>
</reference>